<sequence>MTLLPGDNSHYDYSALSCASDTSFHPAFFPQRQAIKGVFYRRAQRLRPQDDLHQSCSLGDRRRQIIINVGGIKYSLPWTTLDEFPLTRLGQLKACTNFDDILSVCDDYDVTCNEFFFDRNPGAFGTILTFLRAGKLRLLREMCALSFQEELLYWGIAEDHLDGCCKRRYLQKIEEFAEMMEREEEEEPLDSEDQESEGPSASEGRLSRCMRRLRDMVERPHSGLPGKVFACLSVLFVTVTAVNLSVSTLPSLREEEEQGQCSQMCHNVFIVESVCVGWFSLEFLLRFIQAPSKFAFLRSPLTLIDLVAILPYYVTLLVDGAASSRRKPSTGNSYLDKVGLVLRVLRALRILYVMRLARHSLGLQTLGLTARRCTREFGLLLLFLCVAIALFAPLLYVIENEMADSPEFTSIPACYWWAVITMTTVGYGDMVPRSTPGQVVALSSILSGILLMAFPVTSIFHTFSRSYLELKQEQERVLIRRAQYLIKTKSQLSGMSQDSDILFGSASSDTRDNN</sequence>
<evidence type="ECO:0000250" key="1">
    <source>
        <dbReference type="UniProtKB" id="D4AD53"/>
    </source>
</evidence>
<evidence type="ECO:0000250" key="2">
    <source>
        <dbReference type="UniProtKB" id="P63142"/>
    </source>
</evidence>
<evidence type="ECO:0000250" key="3">
    <source>
        <dbReference type="UniProtKB" id="Q14721"/>
    </source>
</evidence>
<evidence type="ECO:0000256" key="4">
    <source>
        <dbReference type="SAM" id="MobiDB-lite"/>
    </source>
</evidence>
<evidence type="ECO:0000305" key="5"/>
<evidence type="ECO:0000312" key="6">
    <source>
        <dbReference type="MGI" id="MGI:3616086"/>
    </source>
</evidence>
<reference key="1">
    <citation type="journal article" date="2009" name="PLoS Biol.">
        <title>Lineage-specific biology revealed by a finished genome assembly of the mouse.</title>
        <authorList>
            <person name="Church D.M."/>
            <person name="Goodstadt L."/>
            <person name="Hillier L.W."/>
            <person name="Zody M.C."/>
            <person name="Goldstein S."/>
            <person name="She X."/>
            <person name="Bult C.J."/>
            <person name="Agarwala R."/>
            <person name="Cherry J.L."/>
            <person name="DiCuccio M."/>
            <person name="Hlavina W."/>
            <person name="Kapustin Y."/>
            <person name="Meric P."/>
            <person name="Maglott D."/>
            <person name="Birtle Z."/>
            <person name="Marques A.C."/>
            <person name="Graves T."/>
            <person name="Zhou S."/>
            <person name="Teague B."/>
            <person name="Potamousis K."/>
            <person name="Churas C."/>
            <person name="Place M."/>
            <person name="Herschleb J."/>
            <person name="Runnheim R."/>
            <person name="Forrest D."/>
            <person name="Amos-Landgraf J."/>
            <person name="Schwartz D.C."/>
            <person name="Cheng Z."/>
            <person name="Lindblad-Toh K."/>
            <person name="Eichler E.E."/>
            <person name="Ponting C.P."/>
        </authorList>
    </citation>
    <scope>NUCLEOTIDE SEQUENCE [LARGE SCALE GENOMIC DNA]</scope>
    <source>
        <strain>C57BL/6J</strain>
    </source>
</reference>
<dbReference type="EMBL" id="BX005039">
    <property type="status" value="NOT_ANNOTATED_CDS"/>
    <property type="molecule type" value="Genomic_DNA"/>
</dbReference>
<dbReference type="CCDS" id="CCDS38344.1"/>
<dbReference type="RefSeq" id="NP_001074603.1">
    <property type="nucleotide sequence ID" value="NM_001081134.2"/>
</dbReference>
<dbReference type="RefSeq" id="NP_001366387.1">
    <property type="nucleotide sequence ID" value="NM_001379458.1"/>
</dbReference>
<dbReference type="RefSeq" id="XP_006499601.1">
    <property type="nucleotide sequence ID" value="XM_006499538.3"/>
</dbReference>
<dbReference type="RefSeq" id="XP_006499602.1">
    <property type="nucleotide sequence ID" value="XM_006499539.3"/>
</dbReference>
<dbReference type="SMR" id="A2BDX4"/>
<dbReference type="FunCoup" id="A2BDX4">
    <property type="interactions" value="37"/>
</dbReference>
<dbReference type="STRING" id="10090.ENSMUSP00000104815"/>
<dbReference type="GlyGen" id="A2BDX4">
    <property type="glycosylation" value="1 site"/>
</dbReference>
<dbReference type="PhosphoSitePlus" id="A2BDX4"/>
<dbReference type="PaxDb" id="10090-ENSMUSP00000104815"/>
<dbReference type="ABCD" id="A2BDX4">
    <property type="antibodies" value="1 sequenced antibody"/>
</dbReference>
<dbReference type="Antibodypedia" id="13829">
    <property type="antibodies" value="116 antibodies from 22 providers"/>
</dbReference>
<dbReference type="DNASU" id="241794"/>
<dbReference type="Ensembl" id="ENSMUST00000099069.3">
    <property type="protein sequence ID" value="ENSMUSP00000096668.3"/>
    <property type="gene ID" value="ENSMUSG00000074575.5"/>
</dbReference>
<dbReference type="Ensembl" id="ENSMUST00000109191.2">
    <property type="protein sequence ID" value="ENSMUSP00000104815.2"/>
    <property type="gene ID" value="ENSMUSG00000074575.5"/>
</dbReference>
<dbReference type="GeneID" id="241794"/>
<dbReference type="KEGG" id="mmu:241794"/>
<dbReference type="UCSC" id="uc008oat.1">
    <property type="organism name" value="mouse"/>
</dbReference>
<dbReference type="AGR" id="MGI:3616086"/>
<dbReference type="CTD" id="3755"/>
<dbReference type="MGI" id="MGI:3616086">
    <property type="gene designation" value="Kcng1"/>
</dbReference>
<dbReference type="VEuPathDB" id="HostDB:ENSMUSG00000074575"/>
<dbReference type="eggNOG" id="KOG3713">
    <property type="taxonomic scope" value="Eukaryota"/>
</dbReference>
<dbReference type="GeneTree" id="ENSGT00940000159686"/>
<dbReference type="HOGENOM" id="CLU_011722_4_1_1"/>
<dbReference type="InParanoid" id="A2BDX4"/>
<dbReference type="OMA" id="CAFRNIL"/>
<dbReference type="OrthoDB" id="296522at2759"/>
<dbReference type="PhylomeDB" id="A2BDX4"/>
<dbReference type="TreeFam" id="TF313103"/>
<dbReference type="Reactome" id="R-MMU-1296072">
    <property type="pathway name" value="Voltage gated Potassium channels"/>
</dbReference>
<dbReference type="BioGRID-ORCS" id="241794">
    <property type="hits" value="3 hits in 78 CRISPR screens"/>
</dbReference>
<dbReference type="PRO" id="PR:A2BDX4"/>
<dbReference type="Proteomes" id="UP000000589">
    <property type="component" value="Chromosome 2"/>
</dbReference>
<dbReference type="RNAct" id="A2BDX4">
    <property type="molecule type" value="protein"/>
</dbReference>
<dbReference type="Bgee" id="ENSMUSG00000074575">
    <property type="expression patterns" value="Expressed in cortical plate and 60 other cell types or tissues"/>
</dbReference>
<dbReference type="ExpressionAtlas" id="A2BDX4">
    <property type="expression patterns" value="baseline and differential"/>
</dbReference>
<dbReference type="GO" id="GO:0008076">
    <property type="term" value="C:voltage-gated potassium channel complex"/>
    <property type="evidence" value="ECO:0000250"/>
    <property type="project" value="UniProtKB"/>
</dbReference>
<dbReference type="GO" id="GO:0015459">
    <property type="term" value="F:potassium channel regulator activity"/>
    <property type="evidence" value="ECO:0000250"/>
    <property type="project" value="UniProtKB"/>
</dbReference>
<dbReference type="GO" id="GO:0005249">
    <property type="term" value="F:voltage-gated potassium channel activity"/>
    <property type="evidence" value="ECO:0007669"/>
    <property type="project" value="InterPro"/>
</dbReference>
<dbReference type="GO" id="GO:0006813">
    <property type="term" value="P:potassium ion transport"/>
    <property type="evidence" value="ECO:0000250"/>
    <property type="project" value="UniProtKB"/>
</dbReference>
<dbReference type="GO" id="GO:0051260">
    <property type="term" value="P:protein homooligomerization"/>
    <property type="evidence" value="ECO:0007669"/>
    <property type="project" value="InterPro"/>
</dbReference>
<dbReference type="GO" id="GO:1901379">
    <property type="term" value="P:regulation of potassium ion transmembrane transport"/>
    <property type="evidence" value="ECO:0000250"/>
    <property type="project" value="UniProtKB"/>
</dbReference>
<dbReference type="CDD" id="cd18421">
    <property type="entry name" value="BTB_POZ_KCNG1_2"/>
    <property type="match status" value="1"/>
</dbReference>
<dbReference type="FunFam" id="1.20.120.350:FF:000024">
    <property type="entry name" value="Potassium voltage-gated channel subfamily G member 1"/>
    <property type="match status" value="1"/>
</dbReference>
<dbReference type="FunFam" id="1.10.287.70:FF:000005">
    <property type="entry name" value="potassium voltage-gated channel subfamily G member 1"/>
    <property type="match status" value="1"/>
</dbReference>
<dbReference type="FunFam" id="3.30.710.10:FF:000019">
    <property type="entry name" value="Potassium voltage-gated channel, subfamily G, member 1"/>
    <property type="match status" value="1"/>
</dbReference>
<dbReference type="Gene3D" id="1.10.287.70">
    <property type="match status" value="1"/>
</dbReference>
<dbReference type="Gene3D" id="3.30.710.10">
    <property type="entry name" value="Potassium Channel Kv1.1, Chain A"/>
    <property type="match status" value="1"/>
</dbReference>
<dbReference type="Gene3D" id="1.20.120.350">
    <property type="entry name" value="Voltage-gated potassium channels. Chain C"/>
    <property type="match status" value="1"/>
</dbReference>
<dbReference type="InterPro" id="IPR000210">
    <property type="entry name" value="BTB/POZ_dom"/>
</dbReference>
<dbReference type="InterPro" id="IPR005821">
    <property type="entry name" value="Ion_trans_dom"/>
</dbReference>
<dbReference type="InterPro" id="IPR003968">
    <property type="entry name" value="K_chnl_volt-dep_Kv"/>
</dbReference>
<dbReference type="InterPro" id="IPR003969">
    <property type="entry name" value="K_chnl_volt-dep_Kv6"/>
</dbReference>
<dbReference type="InterPro" id="IPR011333">
    <property type="entry name" value="SKP1/BTB/POZ_sf"/>
</dbReference>
<dbReference type="InterPro" id="IPR003131">
    <property type="entry name" value="T1-type_BTB"/>
</dbReference>
<dbReference type="InterPro" id="IPR028325">
    <property type="entry name" value="VG_K_chnl"/>
</dbReference>
<dbReference type="InterPro" id="IPR027359">
    <property type="entry name" value="Volt_channel_dom_sf"/>
</dbReference>
<dbReference type="PANTHER" id="PTHR11537:SF88">
    <property type="entry name" value="POTASSIUM VOLTAGE-GATED CHANNEL SUBFAMILY G MEMBER 1"/>
    <property type="match status" value="1"/>
</dbReference>
<dbReference type="PANTHER" id="PTHR11537">
    <property type="entry name" value="VOLTAGE-GATED POTASSIUM CHANNEL"/>
    <property type="match status" value="1"/>
</dbReference>
<dbReference type="Pfam" id="PF02214">
    <property type="entry name" value="BTB_2"/>
    <property type="match status" value="1"/>
</dbReference>
<dbReference type="Pfam" id="PF00520">
    <property type="entry name" value="Ion_trans"/>
    <property type="match status" value="1"/>
</dbReference>
<dbReference type="PRINTS" id="PR00169">
    <property type="entry name" value="KCHANNEL"/>
</dbReference>
<dbReference type="PRINTS" id="PR01492">
    <property type="entry name" value="KV6CHANNEL"/>
</dbReference>
<dbReference type="PRINTS" id="PR01491">
    <property type="entry name" value="KVCHANNEL"/>
</dbReference>
<dbReference type="SMART" id="SM00225">
    <property type="entry name" value="BTB"/>
    <property type="match status" value="1"/>
</dbReference>
<dbReference type="SUPFAM" id="SSF54695">
    <property type="entry name" value="POZ domain"/>
    <property type="match status" value="1"/>
</dbReference>
<dbReference type="SUPFAM" id="SSF81324">
    <property type="entry name" value="Voltage-gated potassium channels"/>
    <property type="match status" value="1"/>
</dbReference>
<protein>
    <recommendedName>
        <fullName evidence="5">Voltage-gated potassium channel regulatory subunit KCNG1</fullName>
    </recommendedName>
    <alternativeName>
        <fullName>Potassium voltage-gated channel subfamily G member 1</fullName>
    </alternativeName>
    <alternativeName>
        <fullName>Voltage-gated potassium channel subunit Kv6.1</fullName>
    </alternativeName>
</protein>
<feature type="chain" id="PRO_0000320106" description="Voltage-gated potassium channel regulatory subunit KCNG1">
    <location>
        <begin position="1"/>
        <end position="514"/>
    </location>
</feature>
<feature type="topological domain" description="Cytoplasmic" evidence="2">
    <location>
        <begin position="1"/>
        <end position="224"/>
    </location>
</feature>
<feature type="transmembrane region" description="Helical; Name=Segment S1" evidence="2">
    <location>
        <begin position="225"/>
        <end position="246"/>
    </location>
</feature>
<feature type="topological domain" description="Extracellular" evidence="2">
    <location>
        <begin position="247"/>
        <end position="267"/>
    </location>
</feature>
<feature type="transmembrane region" description="Helical; Name=Segment S2" evidence="2">
    <location>
        <begin position="268"/>
        <end position="289"/>
    </location>
</feature>
<feature type="topological domain" description="Cytoplasmic" evidence="2">
    <location>
        <begin position="290"/>
        <end position="300"/>
    </location>
</feature>
<feature type="transmembrane region" description="Helical; Name=Segment S3" evidence="2">
    <location>
        <begin position="301"/>
        <end position="321"/>
    </location>
</feature>
<feature type="topological domain" description="Extracellular" evidence="2">
    <location>
        <begin position="322"/>
        <end position="338"/>
    </location>
</feature>
<feature type="transmembrane region" description="Helical; Voltage-sensor; Name=Segment S4" evidence="2">
    <location>
        <begin position="339"/>
        <end position="359"/>
    </location>
</feature>
<feature type="topological domain" description="Cytoplasmic" evidence="2">
    <location>
        <begin position="360"/>
        <end position="374"/>
    </location>
</feature>
<feature type="transmembrane region" description="Helical; Name=Segment S5" evidence="2">
    <location>
        <begin position="375"/>
        <end position="396"/>
    </location>
</feature>
<feature type="topological domain" description="Extracellular" evidence="2">
    <location>
        <begin position="397"/>
        <end position="411"/>
    </location>
</feature>
<feature type="intramembrane region" description="Helical; Name=Pore helix" evidence="2">
    <location>
        <begin position="412"/>
        <end position="423"/>
    </location>
</feature>
<feature type="intramembrane region" evidence="2">
    <location>
        <begin position="424"/>
        <end position="431"/>
    </location>
</feature>
<feature type="topological domain" description="Extracellular" evidence="2">
    <location>
        <begin position="432"/>
        <end position="438"/>
    </location>
</feature>
<feature type="transmembrane region" description="Helical; Name=Segment S6" evidence="2">
    <location>
        <begin position="439"/>
        <end position="467"/>
    </location>
</feature>
<feature type="topological domain" description="Cytoplasmic" evidence="2">
    <location>
        <begin position="468"/>
        <end position="514"/>
    </location>
</feature>
<feature type="region of interest" description="Disordered" evidence="4">
    <location>
        <begin position="180"/>
        <end position="205"/>
    </location>
</feature>
<feature type="short sequence motif" description="Selectivity filter" evidence="2">
    <location>
        <begin position="424"/>
        <end position="429"/>
    </location>
</feature>
<feature type="compositionally biased region" description="Acidic residues" evidence="4">
    <location>
        <begin position="180"/>
        <end position="196"/>
    </location>
</feature>
<accession>A2BDX4</accession>
<gene>
    <name evidence="6" type="primary">Kcng1</name>
</gene>
<keyword id="KW-1003">Cell membrane</keyword>
<keyword id="KW-0407">Ion channel</keyword>
<keyword id="KW-0406">Ion transport</keyword>
<keyword id="KW-0472">Membrane</keyword>
<keyword id="KW-0630">Potassium</keyword>
<keyword id="KW-0631">Potassium channel</keyword>
<keyword id="KW-0633">Potassium transport</keyword>
<keyword id="KW-1185">Reference proteome</keyword>
<keyword id="KW-0812">Transmembrane</keyword>
<keyword id="KW-1133">Transmembrane helix</keyword>
<keyword id="KW-0813">Transport</keyword>
<keyword id="KW-0851">Voltage-gated channel</keyword>
<organism>
    <name type="scientific">Mus musculus</name>
    <name type="common">Mouse</name>
    <dbReference type="NCBI Taxonomy" id="10090"/>
    <lineage>
        <taxon>Eukaryota</taxon>
        <taxon>Metazoa</taxon>
        <taxon>Chordata</taxon>
        <taxon>Craniata</taxon>
        <taxon>Vertebrata</taxon>
        <taxon>Euteleostomi</taxon>
        <taxon>Mammalia</taxon>
        <taxon>Eutheria</taxon>
        <taxon>Euarchontoglires</taxon>
        <taxon>Glires</taxon>
        <taxon>Rodentia</taxon>
        <taxon>Myomorpha</taxon>
        <taxon>Muroidea</taxon>
        <taxon>Muridae</taxon>
        <taxon>Murinae</taxon>
        <taxon>Mus</taxon>
        <taxon>Mus</taxon>
    </lineage>
</organism>
<proteinExistence type="inferred from homology"/>
<comment type="function">
    <text evidence="1">Regulatory alpha-subunit of the voltage-gated potassium (Kv) channel which, when coassembled with KCNB1 or KCNB2, can modulate their expression and their gating kinetics by acting on deactivation upon repolarization and inactivation during maintained depolarization. Potassium channel subunit that does not form functional channels by itself.</text>
</comment>
<comment type="subunit">
    <text evidence="1">Heterotetramer with KCNB1 or KCNB2.</text>
</comment>
<comment type="subcellular location">
    <subcellularLocation>
        <location evidence="3">Cell membrane</location>
        <topology evidence="1">Multi-pass membrane protein</topology>
    </subcellularLocation>
</comment>
<comment type="domain">
    <text evidence="2">The transmembrane segment S4 functions as a voltage-sensor and is characterized by a series of positively charged amino acids at every third position. Channel opening and closing is effected by a conformation change that affects the position and orientation of the voltage-sensor paddle formed by S3 and S4 within the membrane. A transmembrane electric field that is positive inside would push the positively charged S4 segment outwards, thereby opening the pore, while a field that is negative inside would pull the S4 segment inwards and close the pore. Changes in the position and orientation of S4 are then transmitted to the activation gate formed by the inner helix bundle via the S4-S5 linker region.</text>
</comment>
<comment type="similarity">
    <text evidence="5">Belongs to the potassium channel family. G (TC 1.A.1.2) subfamily. Kv6.1/KCNG1 sub-subfamily.</text>
</comment>
<name>KCNG1_MOUSE</name>